<keyword id="KW-0067">ATP-binding</keyword>
<keyword id="KW-0997">Cell inner membrane</keyword>
<keyword id="KW-1003">Cell membrane</keyword>
<keyword id="KW-0378">Hydrolase</keyword>
<keyword id="KW-0472">Membrane</keyword>
<keyword id="KW-0479">Metal-binding</keyword>
<keyword id="KW-0482">Metalloprotease</keyword>
<keyword id="KW-0547">Nucleotide-binding</keyword>
<keyword id="KW-0645">Protease</keyword>
<keyword id="KW-1185">Reference proteome</keyword>
<keyword id="KW-0812">Transmembrane</keyword>
<keyword id="KW-1133">Transmembrane helix</keyword>
<keyword id="KW-0862">Zinc</keyword>
<feature type="chain" id="PRO_0000400411" description="ATP-dependent zinc metalloprotease FtsH">
    <location>
        <begin position="1"/>
        <end position="626"/>
    </location>
</feature>
<feature type="topological domain" description="Cytoplasmic" evidence="1">
    <location>
        <begin position="1"/>
        <end position="7"/>
    </location>
</feature>
<feature type="transmembrane region" description="Helical" evidence="1">
    <location>
        <begin position="8"/>
        <end position="28"/>
    </location>
</feature>
<feature type="topological domain" description="Periplasmic" evidence="1">
    <location>
        <begin position="29"/>
        <end position="108"/>
    </location>
</feature>
<feature type="transmembrane region" description="Helical" evidence="1">
    <location>
        <begin position="109"/>
        <end position="129"/>
    </location>
</feature>
<feature type="topological domain" description="Cytoplasmic" evidence="1">
    <location>
        <begin position="130"/>
        <end position="626"/>
    </location>
</feature>
<feature type="active site" evidence="1">
    <location>
        <position position="425"/>
    </location>
</feature>
<feature type="binding site" evidence="1">
    <location>
        <begin position="202"/>
        <end position="209"/>
    </location>
    <ligand>
        <name>ATP</name>
        <dbReference type="ChEBI" id="CHEBI:30616"/>
    </ligand>
</feature>
<feature type="binding site" evidence="1">
    <location>
        <position position="424"/>
    </location>
    <ligand>
        <name>Zn(2+)</name>
        <dbReference type="ChEBI" id="CHEBI:29105"/>
        <note>catalytic</note>
    </ligand>
</feature>
<feature type="binding site" evidence="1">
    <location>
        <position position="428"/>
    </location>
    <ligand>
        <name>Zn(2+)</name>
        <dbReference type="ChEBI" id="CHEBI:29105"/>
        <note>catalytic</note>
    </ligand>
</feature>
<feature type="binding site" evidence="1">
    <location>
        <position position="501"/>
    </location>
    <ligand>
        <name>Zn(2+)</name>
        <dbReference type="ChEBI" id="CHEBI:29105"/>
        <note>catalytic</note>
    </ligand>
</feature>
<name>FTSH_PSELT</name>
<sequence length="626" mass="70073">MNGNRPNYISLIFAALVILSLFWLVRSFYFDTSAPSKMSFSDFIQMAYEEPTRIAEVVVRDDGILRVTTKRGEYYEIYAPWFMQDSETIKVLSEKGVRVTGEKGVSSSFWVNVIGNVIFIGFLLFMFFFMMRTISGRNNQAFTFTKSRAQMNRPGQARVTFKDVAGVDEAVEELKETVLFLKDPGRFSKIGARMPKGILLVGPPGTGKTLLARAVAGEANVPFFHISGSDFVELFVGVGAARVRDLFNQAKANAPCIVFIDEIDAVGRHRGAGLGGGHDEREQTLNQLLVEMDGFDVRQGIVVMAATNRPDILDPALLRPGRFDKKVVLDTPDVRGREEILKIHARNKPIAEDVDIRVLAQRTTGFVGADLENLVNEAALLAARNGRDKIKMEDFEEAIDRVIAGPARKSRVISPREKRIVAYHEVGHAIVSSLLPNADPVHRISIIPRGYRALGYTLQLPAEDRYLVTKQELLDQITGLLGGRAAEELIFQEVTTGAASDIERATELARRMVCQFGMSDKLGPLSWGKTEQEIFLGKELTRMRNYSEEVASEIDEEVRKIVTESYDRAKEILTKYHKQLDELVELLLEREVLEGEELRKILKTELGEEMVNHDKLRAAAGSEQDS</sequence>
<dbReference type="EC" id="3.4.24.-" evidence="1"/>
<dbReference type="EMBL" id="CP000812">
    <property type="protein sequence ID" value="ABV34091.1"/>
    <property type="molecule type" value="Genomic_DNA"/>
</dbReference>
<dbReference type="RefSeq" id="WP_012003567.1">
    <property type="nucleotide sequence ID" value="NZ_BSDV01000001.1"/>
</dbReference>
<dbReference type="SMR" id="A8F7F7"/>
<dbReference type="STRING" id="416591.Tlet_1535"/>
<dbReference type="MEROPS" id="M41.021"/>
<dbReference type="KEGG" id="tle:Tlet_1535"/>
<dbReference type="eggNOG" id="COG0465">
    <property type="taxonomic scope" value="Bacteria"/>
</dbReference>
<dbReference type="HOGENOM" id="CLU_000688_16_2_0"/>
<dbReference type="OrthoDB" id="9809379at2"/>
<dbReference type="Proteomes" id="UP000002016">
    <property type="component" value="Chromosome"/>
</dbReference>
<dbReference type="GO" id="GO:0005886">
    <property type="term" value="C:plasma membrane"/>
    <property type="evidence" value="ECO:0007669"/>
    <property type="project" value="UniProtKB-SubCell"/>
</dbReference>
<dbReference type="GO" id="GO:0005524">
    <property type="term" value="F:ATP binding"/>
    <property type="evidence" value="ECO:0007669"/>
    <property type="project" value="UniProtKB-UniRule"/>
</dbReference>
<dbReference type="GO" id="GO:0016887">
    <property type="term" value="F:ATP hydrolysis activity"/>
    <property type="evidence" value="ECO:0007669"/>
    <property type="project" value="UniProtKB-UniRule"/>
</dbReference>
<dbReference type="GO" id="GO:0004176">
    <property type="term" value="F:ATP-dependent peptidase activity"/>
    <property type="evidence" value="ECO:0007669"/>
    <property type="project" value="InterPro"/>
</dbReference>
<dbReference type="GO" id="GO:0004222">
    <property type="term" value="F:metalloendopeptidase activity"/>
    <property type="evidence" value="ECO:0007669"/>
    <property type="project" value="InterPro"/>
</dbReference>
<dbReference type="GO" id="GO:0008270">
    <property type="term" value="F:zinc ion binding"/>
    <property type="evidence" value="ECO:0007669"/>
    <property type="project" value="UniProtKB-UniRule"/>
</dbReference>
<dbReference type="GO" id="GO:0030163">
    <property type="term" value="P:protein catabolic process"/>
    <property type="evidence" value="ECO:0007669"/>
    <property type="project" value="UniProtKB-UniRule"/>
</dbReference>
<dbReference type="GO" id="GO:0006508">
    <property type="term" value="P:proteolysis"/>
    <property type="evidence" value="ECO:0007669"/>
    <property type="project" value="UniProtKB-KW"/>
</dbReference>
<dbReference type="CDD" id="cd19501">
    <property type="entry name" value="RecA-like_FtsH"/>
    <property type="match status" value="1"/>
</dbReference>
<dbReference type="FunFam" id="1.10.8.60:FF:000001">
    <property type="entry name" value="ATP-dependent zinc metalloprotease FtsH"/>
    <property type="match status" value="1"/>
</dbReference>
<dbReference type="FunFam" id="1.20.58.760:FF:000001">
    <property type="entry name" value="ATP-dependent zinc metalloprotease FtsH"/>
    <property type="match status" value="1"/>
</dbReference>
<dbReference type="FunFam" id="3.40.50.300:FF:000001">
    <property type="entry name" value="ATP-dependent zinc metalloprotease FtsH"/>
    <property type="match status" value="1"/>
</dbReference>
<dbReference type="Gene3D" id="1.10.8.60">
    <property type="match status" value="1"/>
</dbReference>
<dbReference type="Gene3D" id="3.30.720.210">
    <property type="match status" value="1"/>
</dbReference>
<dbReference type="Gene3D" id="3.40.50.300">
    <property type="entry name" value="P-loop containing nucleotide triphosphate hydrolases"/>
    <property type="match status" value="1"/>
</dbReference>
<dbReference type="Gene3D" id="1.20.58.760">
    <property type="entry name" value="Peptidase M41"/>
    <property type="match status" value="1"/>
</dbReference>
<dbReference type="HAMAP" id="MF_01458">
    <property type="entry name" value="FtsH"/>
    <property type="match status" value="1"/>
</dbReference>
<dbReference type="InterPro" id="IPR003593">
    <property type="entry name" value="AAA+_ATPase"/>
</dbReference>
<dbReference type="InterPro" id="IPR041569">
    <property type="entry name" value="AAA_lid_3"/>
</dbReference>
<dbReference type="InterPro" id="IPR003959">
    <property type="entry name" value="ATPase_AAA_core"/>
</dbReference>
<dbReference type="InterPro" id="IPR003960">
    <property type="entry name" value="ATPase_AAA_CS"/>
</dbReference>
<dbReference type="InterPro" id="IPR005936">
    <property type="entry name" value="FtsH"/>
</dbReference>
<dbReference type="InterPro" id="IPR027417">
    <property type="entry name" value="P-loop_NTPase"/>
</dbReference>
<dbReference type="InterPro" id="IPR011546">
    <property type="entry name" value="Pept_M41_FtsH_extracell"/>
</dbReference>
<dbReference type="InterPro" id="IPR000642">
    <property type="entry name" value="Peptidase_M41"/>
</dbReference>
<dbReference type="InterPro" id="IPR037219">
    <property type="entry name" value="Peptidase_M41-like"/>
</dbReference>
<dbReference type="NCBIfam" id="TIGR01241">
    <property type="entry name" value="FtsH_fam"/>
    <property type="match status" value="1"/>
</dbReference>
<dbReference type="PANTHER" id="PTHR23076:SF97">
    <property type="entry name" value="ATP-DEPENDENT ZINC METALLOPROTEASE YME1L1"/>
    <property type="match status" value="1"/>
</dbReference>
<dbReference type="PANTHER" id="PTHR23076">
    <property type="entry name" value="METALLOPROTEASE M41 FTSH"/>
    <property type="match status" value="1"/>
</dbReference>
<dbReference type="Pfam" id="PF00004">
    <property type="entry name" value="AAA"/>
    <property type="match status" value="1"/>
</dbReference>
<dbReference type="Pfam" id="PF17862">
    <property type="entry name" value="AAA_lid_3"/>
    <property type="match status" value="1"/>
</dbReference>
<dbReference type="Pfam" id="PF06480">
    <property type="entry name" value="FtsH_ext"/>
    <property type="match status" value="1"/>
</dbReference>
<dbReference type="Pfam" id="PF01434">
    <property type="entry name" value="Peptidase_M41"/>
    <property type="match status" value="1"/>
</dbReference>
<dbReference type="SMART" id="SM00382">
    <property type="entry name" value="AAA"/>
    <property type="match status" value="1"/>
</dbReference>
<dbReference type="SUPFAM" id="SSF140990">
    <property type="entry name" value="FtsH protease domain-like"/>
    <property type="match status" value="1"/>
</dbReference>
<dbReference type="SUPFAM" id="SSF52540">
    <property type="entry name" value="P-loop containing nucleoside triphosphate hydrolases"/>
    <property type="match status" value="1"/>
</dbReference>
<dbReference type="PROSITE" id="PS00674">
    <property type="entry name" value="AAA"/>
    <property type="match status" value="1"/>
</dbReference>
<evidence type="ECO:0000255" key="1">
    <source>
        <dbReference type="HAMAP-Rule" id="MF_01458"/>
    </source>
</evidence>
<accession>A8F7F7</accession>
<protein>
    <recommendedName>
        <fullName evidence="1">ATP-dependent zinc metalloprotease FtsH</fullName>
        <ecNumber evidence="1">3.4.24.-</ecNumber>
    </recommendedName>
</protein>
<reference key="1">
    <citation type="submission" date="2007-08" db="EMBL/GenBank/DDBJ databases">
        <title>Complete sequence of Thermotoga lettingae TMO.</title>
        <authorList>
            <consortium name="US DOE Joint Genome Institute"/>
            <person name="Copeland A."/>
            <person name="Lucas S."/>
            <person name="Lapidus A."/>
            <person name="Barry K."/>
            <person name="Glavina del Rio T."/>
            <person name="Dalin E."/>
            <person name="Tice H."/>
            <person name="Pitluck S."/>
            <person name="Foster B."/>
            <person name="Bruce D."/>
            <person name="Schmutz J."/>
            <person name="Larimer F."/>
            <person name="Land M."/>
            <person name="Hauser L."/>
            <person name="Kyrpides N."/>
            <person name="Mikhailova N."/>
            <person name="Nelson K."/>
            <person name="Gogarten J.P."/>
            <person name="Noll K."/>
            <person name="Richardson P."/>
        </authorList>
    </citation>
    <scope>NUCLEOTIDE SEQUENCE [LARGE SCALE GENOMIC DNA]</scope>
    <source>
        <strain>ATCC BAA-301 / DSM 14385 / NBRC 107922 / TMO</strain>
    </source>
</reference>
<proteinExistence type="inferred from homology"/>
<gene>
    <name evidence="1" type="primary">ftsH</name>
    <name type="ordered locus">Tlet_1535</name>
</gene>
<organism>
    <name type="scientific">Pseudothermotoga lettingae (strain ATCC BAA-301 / DSM 14385 / NBRC 107922 / TMO)</name>
    <name type="common">Thermotoga lettingae</name>
    <dbReference type="NCBI Taxonomy" id="416591"/>
    <lineage>
        <taxon>Bacteria</taxon>
        <taxon>Thermotogati</taxon>
        <taxon>Thermotogota</taxon>
        <taxon>Thermotogae</taxon>
        <taxon>Thermotogales</taxon>
        <taxon>Thermotogaceae</taxon>
        <taxon>Pseudothermotoga</taxon>
    </lineage>
</organism>
<comment type="function">
    <text evidence="1">Acts as a processive, ATP-dependent zinc metallopeptidase for both cytoplasmic and membrane proteins. Plays a role in the quality control of integral membrane proteins.</text>
</comment>
<comment type="cofactor">
    <cofactor evidence="1">
        <name>Zn(2+)</name>
        <dbReference type="ChEBI" id="CHEBI:29105"/>
    </cofactor>
    <text evidence="1">Binds 1 zinc ion per subunit.</text>
</comment>
<comment type="subunit">
    <text evidence="1">Homohexamer.</text>
</comment>
<comment type="subcellular location">
    <subcellularLocation>
        <location evidence="1">Cell inner membrane</location>
        <topology evidence="1">Multi-pass membrane protein</topology>
        <orientation evidence="1">Cytoplasmic side</orientation>
    </subcellularLocation>
</comment>
<comment type="similarity">
    <text evidence="1">In the central section; belongs to the AAA ATPase family.</text>
</comment>
<comment type="similarity">
    <text evidence="1">In the C-terminal section; belongs to the peptidase M41 family.</text>
</comment>